<feature type="chain" id="PRO_0000385017" description="PHD finger protein 11A">
    <location>
        <begin position="1"/>
        <end position="293"/>
    </location>
</feature>
<feature type="zinc finger region" description="C2HC pre-PHD-type" evidence="2">
    <location>
        <begin position="25"/>
        <end position="61"/>
    </location>
</feature>
<feature type="zinc finger region" description="PHD-type; degenerate" evidence="2">
    <location>
        <begin position="91"/>
        <end position="143"/>
    </location>
</feature>
<feature type="region of interest" description="Disordered" evidence="3">
    <location>
        <begin position="262"/>
        <end position="293"/>
    </location>
</feature>
<comment type="subcellular location">
    <subcellularLocation>
        <location evidence="1">Nucleus</location>
    </subcellularLocation>
</comment>
<accession>Q8BVM9</accession>
<sequence length="293" mass="32673">MAQEKPGCSNPVPNGDCPIIEKMEKRTCALCPEGHEWSQIYFSPSANIVAHENCLLYSSGLVECEAPDLPNTVRNFDVKSVKKEIGRGRRLKCSFCKNKGATMGYDLQSCTKNYHLSCAMEDHAILQVDEDHGTYKLFCQKHAPEGQEPTQRDAAVKAPFLKKCQEAGLLNVLLEYILEKMDLIHGRLLNETASESDYEGIETLLFGCGLFGDTLRKFQEVINSKACEWEERQRLMKQQLEALADLQQNLCSFQENGDLDCSSSTSGSLLPPEDHQVRCQESPEVQAGSGDSL</sequence>
<gene>
    <name type="primary">Phf11a</name>
    <name type="synonym">Phf11</name>
    <name type="synonym">Phf11-4</name>
    <name type="synonym">Phf11l</name>
</gene>
<keyword id="KW-0479">Metal-binding</keyword>
<keyword id="KW-0539">Nucleus</keyword>
<keyword id="KW-1185">Reference proteome</keyword>
<keyword id="KW-0862">Zinc</keyword>
<keyword id="KW-0863">Zinc-finger</keyword>
<proteinExistence type="evidence at transcript level"/>
<name>PH11A_MOUSE</name>
<evidence type="ECO:0000250" key="1"/>
<evidence type="ECO:0000255" key="2">
    <source>
        <dbReference type="PROSITE-ProRule" id="PRU01146"/>
    </source>
</evidence>
<evidence type="ECO:0000256" key="3">
    <source>
        <dbReference type="SAM" id="MobiDB-lite"/>
    </source>
</evidence>
<protein>
    <recommendedName>
        <fullName>PHD finger protein 11A</fullName>
    </recommendedName>
    <alternativeName>
        <fullName>PHD finger protein 11</fullName>
    </alternativeName>
    <alternativeName>
        <fullName>PHD finger protein 11-like</fullName>
    </alternativeName>
</protein>
<dbReference type="EMBL" id="EU155109">
    <property type="protein sequence ID" value="ABY55495.1"/>
    <property type="molecule type" value="mRNA"/>
</dbReference>
<dbReference type="EMBL" id="AK077176">
    <property type="protein sequence ID" value="BAC36663.1"/>
    <property type="molecule type" value="mRNA"/>
</dbReference>
<dbReference type="EMBL" id="CH466535">
    <property type="protein sequence ID" value="EDL36141.1"/>
    <property type="molecule type" value="Genomic_DNA"/>
</dbReference>
<dbReference type="EMBL" id="BC116758">
    <property type="protein sequence ID" value="AAI16759.1"/>
    <property type="molecule type" value="mRNA"/>
</dbReference>
<dbReference type="EMBL" id="BC116760">
    <property type="protein sequence ID" value="AAI16761.1"/>
    <property type="molecule type" value="mRNA"/>
</dbReference>
<dbReference type="CCDS" id="CCDS27169.1"/>
<dbReference type="RefSeq" id="NP_766191.1">
    <property type="nucleotide sequence ID" value="NM_172603.3"/>
</dbReference>
<dbReference type="SMR" id="Q8BVM9"/>
<dbReference type="FunCoup" id="Q8BVM9">
    <property type="interactions" value="951"/>
</dbReference>
<dbReference type="IntAct" id="Q8BVM9">
    <property type="interactions" value="1"/>
</dbReference>
<dbReference type="STRING" id="10090.ENSMUSP00000053146"/>
<dbReference type="iPTMnet" id="Q8BVM9"/>
<dbReference type="PhosphoSitePlus" id="Q8BVM9"/>
<dbReference type="PaxDb" id="10090-ENSMUSP00000053146"/>
<dbReference type="ProteomicsDB" id="289483"/>
<dbReference type="DNASU" id="219131"/>
<dbReference type="Ensembl" id="ENSMUST00000062307.5">
    <property type="protein sequence ID" value="ENSMUSP00000053146.5"/>
    <property type="gene ID" value="ENSMUSG00000044703.6"/>
</dbReference>
<dbReference type="GeneID" id="219131"/>
<dbReference type="KEGG" id="mmu:219131"/>
<dbReference type="UCSC" id="uc007uee.2">
    <property type="organism name" value="mouse"/>
</dbReference>
<dbReference type="AGR" id="MGI:1918441"/>
<dbReference type="CTD" id="219131"/>
<dbReference type="MGI" id="MGI:1918441">
    <property type="gene designation" value="Phf11a"/>
</dbReference>
<dbReference type="VEuPathDB" id="HostDB:ENSMUSG00000044703"/>
<dbReference type="eggNOG" id="KOG1084">
    <property type="taxonomic scope" value="Eukaryota"/>
</dbReference>
<dbReference type="GeneTree" id="ENSGT00950000182865"/>
<dbReference type="HOGENOM" id="CLU_076108_0_0_1"/>
<dbReference type="InParanoid" id="Q8BVM9"/>
<dbReference type="OMA" id="INSKACE"/>
<dbReference type="OrthoDB" id="2384350at2759"/>
<dbReference type="PhylomeDB" id="Q8BVM9"/>
<dbReference type="TreeFam" id="TF325426"/>
<dbReference type="BioGRID-ORCS" id="219131">
    <property type="hits" value="3 hits in 56 CRISPR screens"/>
</dbReference>
<dbReference type="ChiTaRS" id="Phf11a">
    <property type="organism name" value="mouse"/>
</dbReference>
<dbReference type="PRO" id="PR:Q8BVM9"/>
<dbReference type="Proteomes" id="UP000000589">
    <property type="component" value="Chromosome 14"/>
</dbReference>
<dbReference type="RNAct" id="Q8BVM9">
    <property type="molecule type" value="protein"/>
</dbReference>
<dbReference type="Bgee" id="ENSMUSG00000044703">
    <property type="expression patterns" value="Expressed in blastoderm cell in morula and 34 other cell types or tissues"/>
</dbReference>
<dbReference type="GO" id="GO:0005634">
    <property type="term" value="C:nucleus"/>
    <property type="evidence" value="ECO:0007669"/>
    <property type="project" value="UniProtKB-SubCell"/>
</dbReference>
<dbReference type="GO" id="GO:0008270">
    <property type="term" value="F:zinc ion binding"/>
    <property type="evidence" value="ECO:0007669"/>
    <property type="project" value="UniProtKB-KW"/>
</dbReference>
<dbReference type="GO" id="GO:0050776">
    <property type="term" value="P:regulation of immune response"/>
    <property type="evidence" value="ECO:0000315"/>
    <property type="project" value="MGI"/>
</dbReference>
<dbReference type="FunFam" id="3.30.40.10:FF:000425">
    <property type="entry name" value="PHD finger protein 11"/>
    <property type="match status" value="1"/>
</dbReference>
<dbReference type="Gene3D" id="3.30.40.10">
    <property type="entry name" value="Zinc/RING finger domain, C3HC4 (zinc finger)"/>
    <property type="match status" value="1"/>
</dbReference>
<dbReference type="InterPro" id="IPR034732">
    <property type="entry name" value="EPHD"/>
</dbReference>
<dbReference type="InterPro" id="IPR051188">
    <property type="entry name" value="PHD-type_Zinc_Finger"/>
</dbReference>
<dbReference type="InterPro" id="IPR013083">
    <property type="entry name" value="Znf_RING/FYVE/PHD"/>
</dbReference>
<dbReference type="PANTHER" id="PTHR12420">
    <property type="entry name" value="PHD FINGER PROTEIN"/>
    <property type="match status" value="1"/>
</dbReference>
<dbReference type="PANTHER" id="PTHR12420:SF4">
    <property type="entry name" value="PHD FINGER PROTEIN 11"/>
    <property type="match status" value="1"/>
</dbReference>
<dbReference type="Pfam" id="PF13771">
    <property type="entry name" value="zf-HC5HC2H"/>
    <property type="match status" value="1"/>
</dbReference>
<dbReference type="PROSITE" id="PS51805">
    <property type="entry name" value="EPHD"/>
    <property type="match status" value="1"/>
</dbReference>
<reference key="1">
    <citation type="submission" date="2007-09" db="EMBL/GenBank/DDBJ databases">
        <title>Conserved transcription-mediated gene fusion at the Setdb2-Phf11 locus.</title>
        <authorList>
            <person name="Flynn E.K."/>
            <person name="Symer D.E."/>
        </authorList>
    </citation>
    <scope>NUCLEOTIDE SEQUENCE [MRNA]</scope>
    <source>
        <tissue>Thymus</tissue>
    </source>
</reference>
<reference key="2">
    <citation type="journal article" date="2005" name="Science">
        <title>The transcriptional landscape of the mammalian genome.</title>
        <authorList>
            <person name="Carninci P."/>
            <person name="Kasukawa T."/>
            <person name="Katayama S."/>
            <person name="Gough J."/>
            <person name="Frith M.C."/>
            <person name="Maeda N."/>
            <person name="Oyama R."/>
            <person name="Ravasi T."/>
            <person name="Lenhard B."/>
            <person name="Wells C."/>
            <person name="Kodzius R."/>
            <person name="Shimokawa K."/>
            <person name="Bajic V.B."/>
            <person name="Brenner S.E."/>
            <person name="Batalov S."/>
            <person name="Forrest A.R."/>
            <person name="Zavolan M."/>
            <person name="Davis M.J."/>
            <person name="Wilming L.G."/>
            <person name="Aidinis V."/>
            <person name="Allen J.E."/>
            <person name="Ambesi-Impiombato A."/>
            <person name="Apweiler R."/>
            <person name="Aturaliya R.N."/>
            <person name="Bailey T.L."/>
            <person name="Bansal M."/>
            <person name="Baxter L."/>
            <person name="Beisel K.W."/>
            <person name="Bersano T."/>
            <person name="Bono H."/>
            <person name="Chalk A.M."/>
            <person name="Chiu K.P."/>
            <person name="Choudhary V."/>
            <person name="Christoffels A."/>
            <person name="Clutterbuck D.R."/>
            <person name="Crowe M.L."/>
            <person name="Dalla E."/>
            <person name="Dalrymple B.P."/>
            <person name="de Bono B."/>
            <person name="Della Gatta G."/>
            <person name="di Bernardo D."/>
            <person name="Down T."/>
            <person name="Engstrom P."/>
            <person name="Fagiolini M."/>
            <person name="Faulkner G."/>
            <person name="Fletcher C.F."/>
            <person name="Fukushima T."/>
            <person name="Furuno M."/>
            <person name="Futaki S."/>
            <person name="Gariboldi M."/>
            <person name="Georgii-Hemming P."/>
            <person name="Gingeras T.R."/>
            <person name="Gojobori T."/>
            <person name="Green R.E."/>
            <person name="Gustincich S."/>
            <person name="Harbers M."/>
            <person name="Hayashi Y."/>
            <person name="Hensch T.K."/>
            <person name="Hirokawa N."/>
            <person name="Hill D."/>
            <person name="Huminiecki L."/>
            <person name="Iacono M."/>
            <person name="Ikeo K."/>
            <person name="Iwama A."/>
            <person name="Ishikawa T."/>
            <person name="Jakt M."/>
            <person name="Kanapin A."/>
            <person name="Katoh M."/>
            <person name="Kawasawa Y."/>
            <person name="Kelso J."/>
            <person name="Kitamura H."/>
            <person name="Kitano H."/>
            <person name="Kollias G."/>
            <person name="Krishnan S.P."/>
            <person name="Kruger A."/>
            <person name="Kummerfeld S.K."/>
            <person name="Kurochkin I.V."/>
            <person name="Lareau L.F."/>
            <person name="Lazarevic D."/>
            <person name="Lipovich L."/>
            <person name="Liu J."/>
            <person name="Liuni S."/>
            <person name="McWilliam S."/>
            <person name="Madan Babu M."/>
            <person name="Madera M."/>
            <person name="Marchionni L."/>
            <person name="Matsuda H."/>
            <person name="Matsuzawa S."/>
            <person name="Miki H."/>
            <person name="Mignone F."/>
            <person name="Miyake S."/>
            <person name="Morris K."/>
            <person name="Mottagui-Tabar S."/>
            <person name="Mulder N."/>
            <person name="Nakano N."/>
            <person name="Nakauchi H."/>
            <person name="Ng P."/>
            <person name="Nilsson R."/>
            <person name="Nishiguchi S."/>
            <person name="Nishikawa S."/>
            <person name="Nori F."/>
            <person name="Ohara O."/>
            <person name="Okazaki Y."/>
            <person name="Orlando V."/>
            <person name="Pang K.C."/>
            <person name="Pavan W.J."/>
            <person name="Pavesi G."/>
            <person name="Pesole G."/>
            <person name="Petrovsky N."/>
            <person name="Piazza S."/>
            <person name="Reed J."/>
            <person name="Reid J.F."/>
            <person name="Ring B.Z."/>
            <person name="Ringwald M."/>
            <person name="Rost B."/>
            <person name="Ruan Y."/>
            <person name="Salzberg S.L."/>
            <person name="Sandelin A."/>
            <person name="Schneider C."/>
            <person name="Schoenbach C."/>
            <person name="Sekiguchi K."/>
            <person name="Semple C.A."/>
            <person name="Seno S."/>
            <person name="Sessa L."/>
            <person name="Sheng Y."/>
            <person name="Shibata Y."/>
            <person name="Shimada H."/>
            <person name="Shimada K."/>
            <person name="Silva D."/>
            <person name="Sinclair B."/>
            <person name="Sperling S."/>
            <person name="Stupka E."/>
            <person name="Sugiura K."/>
            <person name="Sultana R."/>
            <person name="Takenaka Y."/>
            <person name="Taki K."/>
            <person name="Tammoja K."/>
            <person name="Tan S.L."/>
            <person name="Tang S."/>
            <person name="Taylor M.S."/>
            <person name="Tegner J."/>
            <person name="Teichmann S.A."/>
            <person name="Ueda H.R."/>
            <person name="van Nimwegen E."/>
            <person name="Verardo R."/>
            <person name="Wei C.L."/>
            <person name="Yagi K."/>
            <person name="Yamanishi H."/>
            <person name="Zabarovsky E."/>
            <person name="Zhu S."/>
            <person name="Zimmer A."/>
            <person name="Hide W."/>
            <person name="Bult C."/>
            <person name="Grimmond S.M."/>
            <person name="Teasdale R.D."/>
            <person name="Liu E.T."/>
            <person name="Brusic V."/>
            <person name="Quackenbush J."/>
            <person name="Wahlestedt C."/>
            <person name="Mattick J.S."/>
            <person name="Hume D.A."/>
            <person name="Kai C."/>
            <person name="Sasaki D."/>
            <person name="Tomaru Y."/>
            <person name="Fukuda S."/>
            <person name="Kanamori-Katayama M."/>
            <person name="Suzuki M."/>
            <person name="Aoki J."/>
            <person name="Arakawa T."/>
            <person name="Iida J."/>
            <person name="Imamura K."/>
            <person name="Itoh M."/>
            <person name="Kato T."/>
            <person name="Kawaji H."/>
            <person name="Kawagashira N."/>
            <person name="Kawashima T."/>
            <person name="Kojima M."/>
            <person name="Kondo S."/>
            <person name="Konno H."/>
            <person name="Nakano K."/>
            <person name="Ninomiya N."/>
            <person name="Nishio T."/>
            <person name="Okada M."/>
            <person name="Plessy C."/>
            <person name="Shibata K."/>
            <person name="Shiraki T."/>
            <person name="Suzuki S."/>
            <person name="Tagami M."/>
            <person name="Waki K."/>
            <person name="Watahiki A."/>
            <person name="Okamura-Oho Y."/>
            <person name="Suzuki H."/>
            <person name="Kawai J."/>
            <person name="Hayashizaki Y."/>
        </authorList>
    </citation>
    <scope>NUCLEOTIDE SEQUENCE [LARGE SCALE MRNA]</scope>
    <source>
        <strain>C57BL/6J</strain>
        <tissue>Testis</tissue>
    </source>
</reference>
<reference key="3">
    <citation type="submission" date="2005-09" db="EMBL/GenBank/DDBJ databases">
        <authorList>
            <person name="Mural R.J."/>
            <person name="Adams M.D."/>
            <person name="Myers E.W."/>
            <person name="Smith H.O."/>
            <person name="Venter J.C."/>
        </authorList>
    </citation>
    <scope>NUCLEOTIDE SEQUENCE [LARGE SCALE GENOMIC DNA]</scope>
</reference>
<reference key="4">
    <citation type="journal article" date="2004" name="Genome Res.">
        <title>The status, quality, and expansion of the NIH full-length cDNA project: the Mammalian Gene Collection (MGC).</title>
        <authorList>
            <consortium name="The MGC Project Team"/>
        </authorList>
    </citation>
    <scope>NUCLEOTIDE SEQUENCE [LARGE SCALE MRNA]</scope>
    <source>
        <tissue>Thymus</tissue>
    </source>
</reference>
<organism>
    <name type="scientific">Mus musculus</name>
    <name type="common">Mouse</name>
    <dbReference type="NCBI Taxonomy" id="10090"/>
    <lineage>
        <taxon>Eukaryota</taxon>
        <taxon>Metazoa</taxon>
        <taxon>Chordata</taxon>
        <taxon>Craniata</taxon>
        <taxon>Vertebrata</taxon>
        <taxon>Euteleostomi</taxon>
        <taxon>Mammalia</taxon>
        <taxon>Eutheria</taxon>
        <taxon>Euarchontoglires</taxon>
        <taxon>Glires</taxon>
        <taxon>Rodentia</taxon>
        <taxon>Myomorpha</taxon>
        <taxon>Muroidea</taxon>
        <taxon>Muridae</taxon>
        <taxon>Murinae</taxon>
        <taxon>Mus</taxon>
        <taxon>Mus</taxon>
    </lineage>
</organism>